<reference key="1">
    <citation type="journal article" date="1984" name="Proc. Natl. Acad. Sci. U.S.A.">
        <title>Primary structure of the Escherichia coli ribonucleoside diphosphate reductase operon.</title>
        <authorList>
            <person name="Carlson J."/>
            <person name="Fuchs J.A."/>
            <person name="Messing J."/>
        </authorList>
    </citation>
    <scope>NUCLEOTIDE SEQUENCE [GENOMIC DNA]</scope>
</reference>
<reference key="2">
    <citation type="journal article" date="1997" name="DNA Res.">
        <title>Construction of a contiguous 874-kb sequence of the Escherichia coli-K12 genome corresponding to 50.0-68.8 min on the linkage map and analysis of its sequence features.</title>
        <authorList>
            <person name="Yamamoto Y."/>
            <person name="Aiba H."/>
            <person name="Baba T."/>
            <person name="Hayashi K."/>
            <person name="Inada T."/>
            <person name="Isono K."/>
            <person name="Itoh T."/>
            <person name="Kimura S."/>
            <person name="Kitagawa M."/>
            <person name="Makino K."/>
            <person name="Miki T."/>
            <person name="Mitsuhashi N."/>
            <person name="Mizobuchi K."/>
            <person name="Mori H."/>
            <person name="Nakade S."/>
            <person name="Nakamura Y."/>
            <person name="Nashimoto H."/>
            <person name="Oshima T."/>
            <person name="Oyama S."/>
            <person name="Saito N."/>
            <person name="Sampei G."/>
            <person name="Satoh Y."/>
            <person name="Sivasundaram S."/>
            <person name="Tagami H."/>
            <person name="Takahashi H."/>
            <person name="Takeda J."/>
            <person name="Takemoto K."/>
            <person name="Uehara K."/>
            <person name="Wada C."/>
            <person name="Yamagata S."/>
            <person name="Horiuchi T."/>
        </authorList>
    </citation>
    <scope>NUCLEOTIDE SEQUENCE [LARGE SCALE GENOMIC DNA]</scope>
    <source>
        <strain>K12 / W3110 / ATCC 27325 / DSM 5911</strain>
    </source>
</reference>
<reference key="3">
    <citation type="journal article" date="1997" name="Science">
        <title>The complete genome sequence of Escherichia coli K-12.</title>
        <authorList>
            <person name="Blattner F.R."/>
            <person name="Plunkett G. III"/>
            <person name="Bloch C.A."/>
            <person name="Perna N.T."/>
            <person name="Burland V."/>
            <person name="Riley M."/>
            <person name="Collado-Vides J."/>
            <person name="Glasner J.D."/>
            <person name="Rode C.K."/>
            <person name="Mayhew G.F."/>
            <person name="Gregor J."/>
            <person name="Davis N.W."/>
            <person name="Kirkpatrick H.A."/>
            <person name="Goeden M.A."/>
            <person name="Rose D.J."/>
            <person name="Mau B."/>
            <person name="Shao Y."/>
        </authorList>
    </citation>
    <scope>NUCLEOTIDE SEQUENCE [LARGE SCALE GENOMIC DNA]</scope>
    <source>
        <strain>K12 / MG1655 / ATCC 47076</strain>
    </source>
</reference>
<reference key="4">
    <citation type="journal article" date="2006" name="Mol. Syst. Biol.">
        <title>Highly accurate genome sequences of Escherichia coli K-12 strains MG1655 and W3110.</title>
        <authorList>
            <person name="Hayashi K."/>
            <person name="Morooka N."/>
            <person name="Yamamoto Y."/>
            <person name="Fujita K."/>
            <person name="Isono K."/>
            <person name="Choi S."/>
            <person name="Ohtsubo E."/>
            <person name="Baba T."/>
            <person name="Wanner B.L."/>
            <person name="Mori H."/>
            <person name="Horiuchi T."/>
        </authorList>
    </citation>
    <scope>NUCLEOTIDE SEQUENCE [LARGE SCALE GENOMIC DNA]</scope>
    <source>
        <strain>K12 / W3110 / ATCC 27325 / DSM 5911</strain>
    </source>
</reference>
<reference key="5">
    <citation type="journal article" date="1992" name="J. Bacteriol.">
        <title>pH dependence and gene structure of inaA in Escherichia coli.</title>
        <authorList>
            <person name="White S."/>
            <person name="Tuttle F.E."/>
            <person name="Blankenhorn D."/>
            <person name="Dosch D.C."/>
            <person name="Slonczewski J.L."/>
        </authorList>
    </citation>
    <scope>CHARACTERIZATION</scope>
</reference>
<name>INAA_ECOLI</name>
<sequence>MAVSAKYDEFNHWWATEGDWVEEPNYRRNGMSGVQCVERNGKKLYVKRMTHHLFHSVRYPFGRPTIVREVAVIKELERAGVIVPKIVFGEAVKIEGEWRALLVTEDMAGFISIADWYAQHAVSPYSDEVRQAMLKAVALAFKKMHSINRQHGCCYVRHIYVKTEGNAEAGFLDLEKSRRRLRRDKAINHDFRQLEKYLEPIPKADWEQVKAYYYAM</sequence>
<feature type="chain" id="PRO_0000084193" description="Protein InaA">
    <location>
        <begin position="1"/>
        <end position="216"/>
    </location>
</feature>
<accession>P27294</accession>
<accession>P77545</accession>
<protein>
    <recommendedName>
        <fullName>Protein InaA</fullName>
    </recommendedName>
</protein>
<gene>
    <name type="primary">inaA</name>
    <name type="synonym">yfaG</name>
    <name type="ordered locus">b2237</name>
    <name type="ordered locus">JW2231</name>
</gene>
<proteinExistence type="evidence at protein level"/>
<dbReference type="EMBL" id="K02672">
    <property type="status" value="NOT_ANNOTATED_CDS"/>
    <property type="molecule type" value="Genomic_DNA"/>
</dbReference>
<dbReference type="EMBL" id="U00096">
    <property type="protein sequence ID" value="AAC75297.1"/>
    <property type="molecule type" value="Genomic_DNA"/>
</dbReference>
<dbReference type="EMBL" id="AP009048">
    <property type="protein sequence ID" value="BAA16056.1"/>
    <property type="molecule type" value="Genomic_DNA"/>
</dbReference>
<dbReference type="PIR" id="C64994">
    <property type="entry name" value="C64994"/>
</dbReference>
<dbReference type="RefSeq" id="NP_416740.1">
    <property type="nucleotide sequence ID" value="NC_000913.3"/>
</dbReference>
<dbReference type="RefSeq" id="WP_000301050.1">
    <property type="nucleotide sequence ID" value="NZ_LN832404.1"/>
</dbReference>
<dbReference type="SMR" id="P27294"/>
<dbReference type="BioGRID" id="4260494">
    <property type="interactions" value="30"/>
</dbReference>
<dbReference type="FunCoup" id="P27294">
    <property type="interactions" value="50"/>
</dbReference>
<dbReference type="IntAct" id="P27294">
    <property type="interactions" value="13"/>
</dbReference>
<dbReference type="STRING" id="511145.b2237"/>
<dbReference type="PaxDb" id="511145-b2237"/>
<dbReference type="EnsemblBacteria" id="AAC75297">
    <property type="protein sequence ID" value="AAC75297"/>
    <property type="gene ID" value="b2237"/>
</dbReference>
<dbReference type="GeneID" id="946731"/>
<dbReference type="KEGG" id="ecj:JW2231"/>
<dbReference type="KEGG" id="eco:b2237"/>
<dbReference type="KEGG" id="ecoc:C3026_12500"/>
<dbReference type="PATRIC" id="fig|511145.12.peg.2326"/>
<dbReference type="EchoBASE" id="EB1392"/>
<dbReference type="eggNOG" id="COG3642">
    <property type="taxonomic scope" value="Bacteria"/>
</dbReference>
<dbReference type="HOGENOM" id="CLU_094468_0_0_6"/>
<dbReference type="InParanoid" id="P27294"/>
<dbReference type="OMA" id="WVEEPNQ"/>
<dbReference type="OrthoDB" id="5405319at2"/>
<dbReference type="PhylomeDB" id="P27294"/>
<dbReference type="BioCyc" id="EcoCyc:EG11422-MONOMER"/>
<dbReference type="PRO" id="PR:P27294"/>
<dbReference type="Proteomes" id="UP000000625">
    <property type="component" value="Chromosome"/>
</dbReference>
<dbReference type="GO" id="GO:0005886">
    <property type="term" value="C:plasma membrane"/>
    <property type="evidence" value="ECO:0007005"/>
    <property type="project" value="EcoCyc"/>
</dbReference>
<dbReference type="InterPro" id="IPR011009">
    <property type="entry name" value="Kinase-like_dom_sf"/>
</dbReference>
<dbReference type="InterPro" id="IPR027023">
    <property type="entry name" value="Put_LipoPS_kinase_InaA"/>
</dbReference>
<dbReference type="NCBIfam" id="NF007383">
    <property type="entry name" value="PRK09902.1"/>
    <property type="match status" value="1"/>
</dbReference>
<dbReference type="Pfam" id="PF06293">
    <property type="entry name" value="Kdo"/>
    <property type="match status" value="1"/>
</dbReference>
<dbReference type="PIRSF" id="PIRSF026326">
    <property type="entry name" value="InaA"/>
    <property type="match status" value="1"/>
</dbReference>
<dbReference type="SUPFAM" id="SSF56112">
    <property type="entry name" value="Protein kinase-like (PK-like)"/>
    <property type="match status" value="1"/>
</dbReference>
<evidence type="ECO:0000305" key="1"/>
<comment type="function">
    <text>May be an environmental sensor responsive to several stimuli, including internal pH, proton motive force, temperature, and possibly other unknown factors.</text>
</comment>
<comment type="induction">
    <text>By several factors in addition of internal pH.</text>
</comment>
<comment type="similarity">
    <text evidence="1">Belongs to the protein kinase superfamily. KdkA/RfaP family.</text>
</comment>
<comment type="sequence caution" evidence="1">
    <conflict type="frameshift">
        <sequence resource="EMBL" id="K02672"/>
    </conflict>
</comment>
<keyword id="KW-1185">Reference proteome</keyword>
<organism>
    <name type="scientific">Escherichia coli (strain K12)</name>
    <dbReference type="NCBI Taxonomy" id="83333"/>
    <lineage>
        <taxon>Bacteria</taxon>
        <taxon>Pseudomonadati</taxon>
        <taxon>Pseudomonadota</taxon>
        <taxon>Gammaproteobacteria</taxon>
        <taxon>Enterobacterales</taxon>
        <taxon>Enterobacteriaceae</taxon>
        <taxon>Escherichia</taxon>
    </lineage>
</organism>